<protein>
    <recommendedName>
        <fullName evidence="12">Levansucrase</fullName>
        <ecNumber evidence="2 3 7 8 9">2.4.1.10</ecNumber>
    </recommendedName>
    <alternativeName>
        <fullName evidence="13">Beta-D-fructofuranosyl transferase</fullName>
    </alternativeName>
    <alternativeName>
        <fullName evidence="11">Fructosyltransferase</fullName>
        <shortName evidence="11">FTF</shortName>
    </alternativeName>
    <alternativeName>
        <fullName>Sucrose 6-fructosyl transferase</fullName>
    </alternativeName>
</protein>
<feature type="signal peptide" evidence="16">
    <location>
        <begin position="1"/>
        <end position="29"/>
    </location>
</feature>
<feature type="chain" id="PRO_0000012249" description="Levansucrase">
    <location>
        <begin position="30"/>
        <end position="473"/>
    </location>
</feature>
<feature type="active site" description="Nucleophile" evidence="15">
    <location>
        <position position="86"/>
    </location>
</feature>
<feature type="active site" description="Proton donor/acceptor" evidence="15">
    <location>
        <position position="342"/>
    </location>
</feature>
<feature type="binding site" evidence="2 18 23">
    <location>
        <position position="85"/>
    </location>
    <ligand>
        <name>sucrose</name>
        <dbReference type="ChEBI" id="CHEBI:17992"/>
    </ligand>
</feature>
<feature type="binding site" evidence="2 18 23">
    <location>
        <position position="86"/>
    </location>
    <ligand>
        <name>sucrose</name>
        <dbReference type="ChEBI" id="CHEBI:17992"/>
    </ligand>
</feature>
<feature type="binding site" evidence="2 18 23">
    <location>
        <position position="164"/>
    </location>
    <ligand>
        <name>sucrose</name>
        <dbReference type="ChEBI" id="CHEBI:17992"/>
    </ligand>
</feature>
<feature type="binding site" evidence="2 3 7 8 17 18 19 20 21 23 24 25">
    <location>
        <position position="241"/>
    </location>
    <ligand>
        <name>Ca(2+)</name>
        <dbReference type="ChEBI" id="CHEBI:29108"/>
    </ligand>
</feature>
<feature type="binding site" evidence="2 18 23">
    <location>
        <position position="246"/>
    </location>
    <ligand>
        <name>sucrose</name>
        <dbReference type="ChEBI" id="CHEBI:17992"/>
    </ligand>
</feature>
<feature type="binding site" evidence="2 18 23">
    <location>
        <position position="247"/>
    </location>
    <ligand>
        <name>sucrose</name>
        <dbReference type="ChEBI" id="CHEBI:17992"/>
    </ligand>
</feature>
<feature type="binding site" evidence="2 3 7 8 17 18 19 20 21 23 24 25">
    <location>
        <position position="272"/>
    </location>
    <ligand>
        <name>Ca(2+)</name>
        <dbReference type="ChEBI" id="CHEBI:29108"/>
    </ligand>
</feature>
<feature type="binding site" evidence="2 3 7 8 17 18 19 20 21 23 24 25">
    <location>
        <position position="308"/>
    </location>
    <ligand>
        <name>Ca(2+)</name>
        <dbReference type="ChEBI" id="CHEBI:29108"/>
    </ligand>
</feature>
<feature type="binding site" evidence="2 3 7 8 17 18 19 20 21 23 24 25">
    <location>
        <position position="310"/>
    </location>
    <ligand>
        <name>Ca(2+)</name>
        <dbReference type="ChEBI" id="CHEBI:29108"/>
    </ligand>
</feature>
<feature type="binding site" evidence="2 3 7 8 17 18 19 20 21 23 24 25">
    <location>
        <position position="339"/>
    </location>
    <ligand>
        <name>Ca(2+)</name>
        <dbReference type="ChEBI" id="CHEBI:29108"/>
    </ligand>
</feature>
<feature type="binding site" evidence="2 18 23">
    <location>
        <position position="340"/>
    </location>
    <ligand>
        <name>sucrose</name>
        <dbReference type="ChEBI" id="CHEBI:17992"/>
    </ligand>
</feature>
<feature type="binding site" evidence="2 18 23">
    <location>
        <position position="360"/>
    </location>
    <ligand>
        <name>sucrose</name>
        <dbReference type="ChEBI" id="CHEBI:17992"/>
    </ligand>
</feature>
<feature type="site" description="Transition state stabilizer" evidence="15">
    <location>
        <position position="247"/>
    </location>
</feature>
<feature type="mutagenesis site" description="Lack of levan synthesis." evidence="2">
    <original>D</original>
    <variation>A</variation>
    <location>
        <position position="86"/>
    </location>
</feature>
<feature type="mutagenesis site" description="2-fold decrease in catalytic efficiency. Synthesizes a bimodal levan molecular weight distribution." evidence="8">
    <original>D</original>
    <variation>A</variation>
    <location>
        <position position="117"/>
    </location>
</feature>
<feature type="mutagenesis site" description="Drastic decrease in catalytic efficiency. Slight increase in affinity for sucrose. Increases transfructosylation activity. Uses acceptors such as glucose and short levans with an average molecular weight of 7.6 kDa more efficiently than wild-type enzyme, leading to the enhanced synthesis of medium and high molecular weight polymer." evidence="3 7">
    <original>S</original>
    <variation>A</variation>
    <location>
        <position position="164"/>
    </location>
</feature>
<feature type="mutagenesis site" description="Loss of activity." evidence="3">
    <original>S</original>
    <variation>K</variation>
    <location>
        <position position="164"/>
    </location>
</feature>
<feature type="mutagenesis site" description="3.7-fold decrease in catalytic efficiency. 1.6-fold increase in KM for sucrose. Synthesizes only high molecular weight levans." evidence="8">
    <original>F</original>
    <variation>A</variation>
    <location>
        <position position="182"/>
    </location>
</feature>
<feature type="mutagenesis site" description="2.1-fold decrease in catalytic efficiency. Synthesizes a bimodal levan molecular weight distribution." evidence="8">
    <original>F</original>
    <variation>W</variation>
    <location>
        <position position="182"/>
    </location>
</feature>
<feature type="mutagenesis site" description="1.7-fold decrease in catalytic efficiency. Synthesizes a bimodal levan molecular weight distribution." evidence="8">
    <original>F</original>
    <variation>Y</variation>
    <location>
        <position position="182"/>
    </location>
</feature>
<feature type="mutagenesis site" description="Slight decrease in catalytic efficiency. Synthesizes a bimodal levan molecular weight distribution." evidence="8">
    <original>Y</original>
    <variation>A</variation>
    <location>
        <position position="187"/>
    </location>
</feature>
<feature type="mutagenesis site" description="Slight decrease in catalytic efficiency. Synthesizes only high molecular weight levans." evidence="8">
    <original>Y</original>
    <variation>A</variation>
    <location>
        <position position="237"/>
    </location>
</feature>
<feature type="mutagenesis site" description="14.6-fold decrease in catalytic efficiency. 2.2-fold increase in KM for sucrose. Levans are barely formed." evidence="8">
    <original>N</original>
    <variation>A</variation>
    <location>
        <position position="242"/>
    </location>
</feature>
<feature type="mutagenesis site" description="Decrease in catalytic efficiency." evidence="3">
    <original>H</original>
    <variation>L</variation>
    <location>
        <position position="243"/>
    </location>
</feature>
<feature type="mutagenesis site" description="Lack of levan synthesis." evidence="2">
    <original>D</original>
    <variation>A</variation>
    <location>
        <position position="247"/>
    </location>
</feature>
<feature type="mutagenesis site" description="Increases transfructosylation activity." evidence="3">
    <original>I</original>
    <variation>V</variation>
    <location>
        <position position="341"/>
    </location>
</feature>
<feature type="mutagenesis site" description="Lack of levan synthesis." evidence="2">
    <original>E</original>
    <variation>A</variation>
    <location>
        <position position="342"/>
    </location>
</feature>
<feature type="mutagenesis site" description="Increases transfructosylation activity." evidence="3">
    <original>A</original>
    <variation>P</variation>
    <location>
        <position position="344"/>
    </location>
</feature>
<feature type="mutagenesis site" description="Decrease in catalytic efficiency. Reduces affinity for sucrose. Synthesizes mainly oligosaccharides, but can still catalyze the synthesis of low amounts of levan." evidence="3">
    <original>R</original>
    <variation>K</variation>
    <location>
        <position position="360"/>
    </location>
</feature>
<feature type="mutagenesis site" description="Drastic decrease in catalytic efficiency. Reduces affinity for sucrose. Synthesizes only oligosaccharides." evidence="3">
    <original>R</original>
    <variation>S</variation>
    <location>
        <position position="360"/>
    </location>
</feature>
<feature type="mutagenesis site" description="Drastic decrease in catalytic efficiency. Reduces affinity for sucrose. Synthesizes mainly oligosaccharides, but can still catalyze the synthesis of low amounts of levan." evidence="3">
    <original>G</original>
    <variation>F</variation>
    <location>
        <position position="361"/>
    </location>
</feature>
<feature type="mutagenesis site" description="2.9-fold decrease in catalytic efficiency. Synthesizes only high molecular weight levans." evidence="8">
    <original>K</original>
    <variation>A</variation>
    <location>
        <position position="363"/>
    </location>
</feature>
<feature type="mutagenesis site" description="Increases transfructosylation activity." evidence="3">
    <original>F</original>
    <variation>W</variation>
    <location>
        <position position="414"/>
    </location>
</feature>
<feature type="mutagenesis site" description="Drastic decrease in catalytic efficiency. Reduces affinity for sucrose. Synthesizes only oligosaccharides." evidence="3">
    <original>Y</original>
    <variation>N</variation>
    <location>
        <position position="429"/>
    </location>
</feature>
<feature type="mutagenesis site" description="Drastic decrease in catalytic efficiency. Reduces affinity for sucrose. Synthesizes only oligosaccharides." evidence="3">
    <original>R</original>
    <variation>A</variation>
    <location>
        <position position="433"/>
    </location>
</feature>
<feature type="sequence conflict" description="In Ref. 4; AAA22724." evidence="14" ref="4">
    <original>V</original>
    <variation>I</variation>
    <location>
        <position position="12"/>
    </location>
</feature>
<feature type="strand" evidence="26">
    <location>
        <begin position="43"/>
        <end position="45"/>
    </location>
</feature>
<feature type="helix" evidence="26">
    <location>
        <begin position="48"/>
        <end position="52"/>
    </location>
</feature>
<feature type="helix" evidence="26">
    <location>
        <begin position="54"/>
        <end position="57"/>
    </location>
</feature>
<feature type="helix" evidence="26">
    <location>
        <begin position="61"/>
        <end position="63"/>
    </location>
</feature>
<feature type="helix" evidence="26">
    <location>
        <begin position="70"/>
        <end position="72"/>
    </location>
</feature>
<feature type="helix" evidence="26">
    <location>
        <begin position="77"/>
        <end position="79"/>
    </location>
</feature>
<feature type="strand" evidence="26">
    <location>
        <begin position="83"/>
        <end position="91"/>
    </location>
</feature>
<feature type="strand" evidence="26">
    <location>
        <begin position="95"/>
        <end position="97"/>
    </location>
</feature>
<feature type="strand" evidence="26">
    <location>
        <begin position="103"/>
        <end position="111"/>
    </location>
</feature>
<feature type="strand" evidence="26">
    <location>
        <begin position="120"/>
        <end position="127"/>
    </location>
</feature>
<feature type="helix" evidence="26">
    <location>
        <begin position="133"/>
        <end position="135"/>
    </location>
</feature>
<feature type="strand" evidence="26">
    <location>
        <begin position="137"/>
        <end position="142"/>
    </location>
</feature>
<feature type="helix" evidence="26">
    <location>
        <begin position="147"/>
        <end position="150"/>
    </location>
</feature>
<feature type="helix" evidence="26">
    <location>
        <begin position="156"/>
        <end position="158"/>
    </location>
</feature>
<feature type="strand" evidence="26">
    <location>
        <begin position="161"/>
        <end position="169"/>
    </location>
</feature>
<feature type="strand" evidence="26">
    <location>
        <begin position="175"/>
        <end position="183"/>
    </location>
</feature>
<feature type="turn" evidence="26">
    <location>
        <begin position="184"/>
        <end position="188"/>
    </location>
</feature>
<feature type="strand" evidence="26">
    <location>
        <begin position="189"/>
        <end position="201"/>
    </location>
</feature>
<feature type="strand" evidence="26">
    <location>
        <begin position="206"/>
        <end position="218"/>
    </location>
</feature>
<feature type="strand" evidence="26">
    <location>
        <begin position="222"/>
        <end position="225"/>
    </location>
</feature>
<feature type="helix" evidence="26">
    <location>
        <begin position="228"/>
        <end position="234"/>
    </location>
</feature>
<feature type="helix" evidence="26">
    <location>
        <begin position="236"/>
        <end position="239"/>
    </location>
</feature>
<feature type="strand" evidence="26">
    <location>
        <begin position="246"/>
        <end position="253"/>
    </location>
</feature>
<feature type="strand" evidence="26">
    <location>
        <begin position="256"/>
        <end position="265"/>
    </location>
</feature>
<feature type="strand" evidence="28">
    <location>
        <begin position="267"/>
        <end position="270"/>
    </location>
</feature>
<feature type="helix" evidence="26">
    <location>
        <begin position="274"/>
        <end position="278"/>
    </location>
</feature>
<feature type="helix" evidence="26">
    <location>
        <begin position="280"/>
        <end position="282"/>
    </location>
</feature>
<feature type="helix" evidence="26">
    <location>
        <begin position="287"/>
        <end position="299"/>
    </location>
</feature>
<feature type="helix" evidence="26">
    <location>
        <begin position="303"/>
        <end position="308"/>
    </location>
</feature>
<feature type="strand" evidence="26">
    <location>
        <begin position="311"/>
        <end position="318"/>
    </location>
</feature>
<feature type="strand" evidence="26">
    <location>
        <begin position="322"/>
        <end position="333"/>
    </location>
</feature>
<feature type="turn" evidence="26">
    <location>
        <begin position="335"/>
        <end position="337"/>
    </location>
</feature>
<feature type="strand" evidence="26">
    <location>
        <begin position="342"/>
        <end position="349"/>
    </location>
</feature>
<feature type="strand" evidence="26">
    <location>
        <begin position="352"/>
        <end position="360"/>
    </location>
</feature>
<feature type="helix" evidence="26">
    <location>
        <begin position="361"/>
        <end position="363"/>
    </location>
</feature>
<feature type="strand" evidence="26">
    <location>
        <begin position="374"/>
        <end position="383"/>
    </location>
</feature>
<feature type="helix" evidence="26">
    <location>
        <begin position="391"/>
        <end position="393"/>
    </location>
</feature>
<feature type="strand" evidence="26">
    <location>
        <begin position="395"/>
        <end position="400"/>
    </location>
</feature>
<feature type="strand" evidence="27">
    <location>
        <begin position="404"/>
        <end position="406"/>
    </location>
</feature>
<feature type="strand" evidence="26">
    <location>
        <begin position="410"/>
        <end position="416"/>
    </location>
</feature>
<feature type="strand" evidence="26">
    <location>
        <begin position="419"/>
        <end position="431"/>
    </location>
</feature>
<feature type="strand" evidence="27">
    <location>
        <begin position="435"/>
        <end position="438"/>
    </location>
</feature>
<feature type="strand" evidence="29">
    <location>
        <begin position="441"/>
        <end position="443"/>
    </location>
</feature>
<feature type="strand" evidence="26">
    <location>
        <begin position="447"/>
        <end position="452"/>
    </location>
</feature>
<feature type="strand" evidence="26">
    <location>
        <begin position="455"/>
        <end position="458"/>
    </location>
</feature>
<proteinExistence type="evidence at protein level"/>
<evidence type="ECO:0000269" key="1">
    <source>
    </source>
</evidence>
<evidence type="ECO:0000269" key="2">
    <source>
    </source>
</evidence>
<evidence type="ECO:0000269" key="3">
    <source>
    </source>
</evidence>
<evidence type="ECO:0000269" key="4">
    <source>
    </source>
</evidence>
<evidence type="ECO:0000269" key="5">
    <source>
    </source>
</evidence>
<evidence type="ECO:0000269" key="6">
    <source>
    </source>
</evidence>
<evidence type="ECO:0000269" key="7">
    <source>
    </source>
</evidence>
<evidence type="ECO:0000269" key="8">
    <source>
    </source>
</evidence>
<evidence type="ECO:0000269" key="9">
    <source>
    </source>
</evidence>
<evidence type="ECO:0000269" key="10">
    <source>
    </source>
</evidence>
<evidence type="ECO:0000303" key="11">
    <source>
    </source>
</evidence>
<evidence type="ECO:0000303" key="12">
    <source>
    </source>
</evidence>
<evidence type="ECO:0000303" key="13">
    <source>
    </source>
</evidence>
<evidence type="ECO:0000305" key="14"/>
<evidence type="ECO:0000305" key="15">
    <source>
    </source>
</evidence>
<evidence type="ECO:0000305" key="16">
    <source>
    </source>
</evidence>
<evidence type="ECO:0007744" key="17">
    <source>
        <dbReference type="PDB" id="1OYG"/>
    </source>
</evidence>
<evidence type="ECO:0007744" key="18">
    <source>
        <dbReference type="PDB" id="1PT2"/>
    </source>
</evidence>
<evidence type="ECO:0007744" key="19">
    <source>
        <dbReference type="PDB" id="2VDT"/>
    </source>
</evidence>
<evidence type="ECO:0007744" key="20">
    <source>
        <dbReference type="PDB" id="3BYJ"/>
    </source>
</evidence>
<evidence type="ECO:0007744" key="21">
    <source>
        <dbReference type="PDB" id="3BYK"/>
    </source>
</evidence>
<evidence type="ECO:0007744" key="22">
    <source>
        <dbReference type="PDB" id="3BYL"/>
    </source>
</evidence>
<evidence type="ECO:0007744" key="23">
    <source>
        <dbReference type="PDB" id="3BYN"/>
    </source>
</evidence>
<evidence type="ECO:0007744" key="24">
    <source>
        <dbReference type="PDB" id="6PWQ"/>
    </source>
</evidence>
<evidence type="ECO:0007744" key="25">
    <source>
        <dbReference type="PDB" id="6VHQ"/>
    </source>
</evidence>
<evidence type="ECO:0007829" key="26">
    <source>
        <dbReference type="PDB" id="1OYG"/>
    </source>
</evidence>
<evidence type="ECO:0007829" key="27">
    <source>
        <dbReference type="PDB" id="2VDT"/>
    </source>
</evidence>
<evidence type="ECO:0007829" key="28">
    <source>
        <dbReference type="PDB" id="6PWQ"/>
    </source>
</evidence>
<evidence type="ECO:0007829" key="29">
    <source>
        <dbReference type="PDB" id="6VHQ"/>
    </source>
</evidence>
<keyword id="KW-0002">3D-structure</keyword>
<keyword id="KW-0106">Calcium</keyword>
<keyword id="KW-0119">Carbohydrate metabolism</keyword>
<keyword id="KW-0328">Glycosyltransferase</keyword>
<keyword id="KW-0479">Metal-binding</keyword>
<keyword id="KW-1185">Reference proteome</keyword>
<keyword id="KW-0964">Secreted</keyword>
<keyword id="KW-0732">Signal</keyword>
<keyword id="KW-0808">Transferase</keyword>
<dbReference type="EC" id="2.4.1.10" evidence="2 3 7 8 9"/>
<dbReference type="EMBL" id="M14202">
    <property type="protein sequence ID" value="AAA22725.1"/>
    <property type="molecule type" value="Genomic_DNA"/>
</dbReference>
<dbReference type="EMBL" id="Z94043">
    <property type="protein sequence ID" value="CAB08015.1"/>
    <property type="molecule type" value="Genomic_DNA"/>
</dbReference>
<dbReference type="EMBL" id="AL009126">
    <property type="protein sequence ID" value="CAB15450.1"/>
    <property type="molecule type" value="Genomic_DNA"/>
</dbReference>
<dbReference type="EMBL" id="K01987">
    <property type="protein sequence ID" value="AAA22724.1"/>
    <property type="molecule type" value="Genomic_DNA"/>
</dbReference>
<dbReference type="EMBL" id="X02730">
    <property type="protein sequence ID" value="CAA26513.1"/>
    <property type="molecule type" value="Genomic_DNA"/>
</dbReference>
<dbReference type="PIR" id="S07309">
    <property type="entry name" value="A25040"/>
</dbReference>
<dbReference type="RefSeq" id="NP_391325.1">
    <property type="nucleotide sequence ID" value="NC_000964.3"/>
</dbReference>
<dbReference type="RefSeq" id="WP_001022105.1">
    <property type="nucleotide sequence ID" value="NZ_OZ025638.1"/>
</dbReference>
<dbReference type="PDB" id="1OYG">
    <property type="method" value="X-ray"/>
    <property type="resolution" value="1.50 A"/>
    <property type="chains" value="A=30-473"/>
</dbReference>
<dbReference type="PDB" id="1PT2">
    <property type="method" value="X-ray"/>
    <property type="resolution" value="2.10 A"/>
    <property type="chains" value="A=30-473"/>
</dbReference>
<dbReference type="PDB" id="2VDT">
    <property type="method" value="X-ray"/>
    <property type="resolution" value="3.20 A"/>
    <property type="chains" value="A=34-472"/>
</dbReference>
<dbReference type="PDB" id="3BYJ">
    <property type="method" value="X-ray"/>
    <property type="resolution" value="2.10 A"/>
    <property type="chains" value="A=1-473"/>
</dbReference>
<dbReference type="PDB" id="3BYK">
    <property type="method" value="X-ray"/>
    <property type="resolution" value="2.10 A"/>
    <property type="chains" value="A=1-473"/>
</dbReference>
<dbReference type="PDB" id="3BYL">
    <property type="method" value="X-ray"/>
    <property type="resolution" value="2.10 A"/>
    <property type="chains" value="A=1-473"/>
</dbReference>
<dbReference type="PDB" id="3BYN">
    <property type="method" value="X-ray"/>
    <property type="resolution" value="2.10 A"/>
    <property type="chains" value="A=1-473"/>
</dbReference>
<dbReference type="PDB" id="6PWQ">
    <property type="method" value="X-ray"/>
    <property type="resolution" value="2.60 A"/>
    <property type="chains" value="A/B=30-473"/>
</dbReference>
<dbReference type="PDB" id="6VHQ">
    <property type="method" value="X-ray"/>
    <property type="resolution" value="2.05 A"/>
    <property type="chains" value="A/B=30-473"/>
</dbReference>
<dbReference type="PDBsum" id="1OYG"/>
<dbReference type="PDBsum" id="1PT2"/>
<dbReference type="PDBsum" id="2VDT"/>
<dbReference type="PDBsum" id="3BYJ"/>
<dbReference type="PDBsum" id="3BYK"/>
<dbReference type="PDBsum" id="3BYL"/>
<dbReference type="PDBsum" id="3BYN"/>
<dbReference type="PDBsum" id="6PWQ"/>
<dbReference type="PDBsum" id="6VHQ"/>
<dbReference type="SMR" id="P05655"/>
<dbReference type="FunCoup" id="P05655">
    <property type="interactions" value="203"/>
</dbReference>
<dbReference type="STRING" id="224308.BSU34450"/>
<dbReference type="DrugBank" id="DB02772">
    <property type="generic name" value="Sucrose"/>
</dbReference>
<dbReference type="CAZy" id="GH68">
    <property type="family name" value="Glycoside Hydrolase Family 68"/>
</dbReference>
<dbReference type="PaxDb" id="224308-BSU34450"/>
<dbReference type="EnsemblBacteria" id="CAB15450">
    <property type="protein sequence ID" value="CAB15450"/>
    <property type="gene ID" value="BSU_34450"/>
</dbReference>
<dbReference type="GeneID" id="936413"/>
<dbReference type="KEGG" id="bsu:BSU34450"/>
<dbReference type="PATRIC" id="fig|224308.179.peg.3732"/>
<dbReference type="eggNOG" id="COG1621">
    <property type="taxonomic scope" value="Bacteria"/>
</dbReference>
<dbReference type="InParanoid" id="P05655"/>
<dbReference type="OrthoDB" id="2210426at2"/>
<dbReference type="PhylomeDB" id="P05655"/>
<dbReference type="BioCyc" id="BSUB:BSU34450-MONOMER"/>
<dbReference type="BioCyc" id="MetaCyc:BSU34450-MONOMER"/>
<dbReference type="BRENDA" id="2.4.1.10">
    <property type="organism ID" value="658"/>
</dbReference>
<dbReference type="SABIO-RK" id="P05655"/>
<dbReference type="EvolutionaryTrace" id="P05655"/>
<dbReference type="Proteomes" id="UP000001570">
    <property type="component" value="Chromosome"/>
</dbReference>
<dbReference type="GO" id="GO:0005576">
    <property type="term" value="C:extracellular region"/>
    <property type="evidence" value="ECO:0007669"/>
    <property type="project" value="UniProtKB-SubCell"/>
</dbReference>
<dbReference type="GO" id="GO:0050053">
    <property type="term" value="F:levansucrase activity"/>
    <property type="evidence" value="ECO:0007669"/>
    <property type="project" value="UniProtKB-EC"/>
</dbReference>
<dbReference type="GO" id="GO:0046872">
    <property type="term" value="F:metal ion binding"/>
    <property type="evidence" value="ECO:0007669"/>
    <property type="project" value="UniProtKB-KW"/>
</dbReference>
<dbReference type="GO" id="GO:0009758">
    <property type="term" value="P:carbohydrate utilization"/>
    <property type="evidence" value="ECO:0007669"/>
    <property type="project" value="InterPro"/>
</dbReference>
<dbReference type="CDD" id="cd08997">
    <property type="entry name" value="GH68"/>
    <property type="match status" value="1"/>
</dbReference>
<dbReference type="Gene3D" id="2.115.10.20">
    <property type="entry name" value="Glycosyl hydrolase domain, family 43"/>
    <property type="match status" value="1"/>
</dbReference>
<dbReference type="InterPro" id="IPR003469">
    <property type="entry name" value="Glyco_hydro_68"/>
</dbReference>
<dbReference type="InterPro" id="IPR023296">
    <property type="entry name" value="Glyco_hydro_beta-prop_sf"/>
</dbReference>
<dbReference type="Pfam" id="PF02435">
    <property type="entry name" value="Glyco_hydro_68"/>
    <property type="match status" value="1"/>
</dbReference>
<dbReference type="SUPFAM" id="SSF75005">
    <property type="entry name" value="Arabinanase/levansucrase/invertase"/>
    <property type="match status" value="1"/>
</dbReference>
<name>LSC_BACSU</name>
<organism>
    <name type="scientific">Bacillus subtilis (strain 168)</name>
    <dbReference type="NCBI Taxonomy" id="224308"/>
    <lineage>
        <taxon>Bacteria</taxon>
        <taxon>Bacillati</taxon>
        <taxon>Bacillota</taxon>
        <taxon>Bacilli</taxon>
        <taxon>Bacillales</taxon>
        <taxon>Bacillaceae</taxon>
        <taxon>Bacillus</taxon>
    </lineage>
</organism>
<comment type="function">
    <text evidence="2 3 7 8 9">Catalyzes the synthesis of levan, a fructose polymer, by transferring the fructosyl moiety from sucrose to a growing acceptor molecule (PubMed:14517548, PubMed:18596022, PubMed:32553967, PubMed:33303628, PubMed:4206083). Also displays sucrose hydrolase activity (PubMed:18596022, PubMed:32553967, PubMed:33303628, PubMed:4206083). At low sucrose concentrations, functions as an hydrolase with water as acceptor, whereas at higher substrate concentrations it adds fructosyl units to a growing levan chain (PubMed:4206083).</text>
</comment>
<comment type="catalytic activity">
    <reaction evidence="2 3 7 8 9">
        <text>[6)-beta-D-fructofuranosyl-(2-&gt;](n) alpha-D-glucopyranoside + sucrose = [6)-beta-D-fructofuranosyl-(2-&gt;](n+1) alpha-D-glucopyranoside + D-glucose</text>
        <dbReference type="Rhea" id="RHEA:13653"/>
        <dbReference type="Rhea" id="RHEA-COMP:13093"/>
        <dbReference type="Rhea" id="RHEA-COMP:13094"/>
        <dbReference type="ChEBI" id="CHEBI:4167"/>
        <dbReference type="ChEBI" id="CHEBI:17992"/>
        <dbReference type="ChEBI" id="CHEBI:134464"/>
        <dbReference type="EC" id="2.4.1.10"/>
    </reaction>
</comment>
<comment type="activity regulation">
    <text evidence="2 5">Ca(2+) may play an important structural role and promote stability of levansucrase (PubMed:14517548). The enzyme concentration is a factor defining the molecular weight (MW) levan distribution (PubMed:26256357). A bimodal distribution is reported at the usual enzyme concentrations (PubMed:26256357). At low concentrations, the enzyme synthesizes high MW levan, and at high concentrations, it synthesizes low MW levan (PubMed:26256357).</text>
</comment>
<comment type="biophysicochemical properties">
    <kinetics>
        <KM evidence="3">8 mM for sucrose</KM>
        <KM evidence="8">9 mM for sucrose</KM>
        <KM evidence="7">8.3 mM for sucrose (for hydrolysis, in the absence of levan F4)</KM>
        <KM evidence="7">6.9 mM for sucrose (for hydrolysis, in the presence of 5 g/L levan F4)</KM>
        <KM evidence="7">6.8 mM for sucrose (for hydrolysis, in the presence of 55 g/L levan F4)</KM>
        <KM evidence="7">57.6 mM for sucrose (for transfructosylation, in the absence of levan F4)</KM>
        <KM evidence="7">20.9 mM for sucrose (for transfructosylation, in the presence of 5 g/L levan F4)</KM>
        <KM evidence="7">10.9 mM for sucrose (for transfructosylation, in the presence of 55 g/L levan F4)</KM>
        <text evidence="3 7 8">kcat is 164.6 sec(-1) with sucrose as substrate (PubMed:18596022). kcat is 236.7 sec(-1) with sucrose as substrate (PubMed:33303628). kcat is 71.2 sec(-1) with sucrose as substrate (for hydrolysis, in the absence of levan F4). kcat is 69.8 sec(-1) with sucrose as substrate (for hydrolysis, in the presence of 5 g/L levan F4). kcat is 65.9 sec(-1) with sucrose as substrate (for hydrolysis, in the presence of 55 g/L levan F4). kcat is 26.6 sec(-1) with sucrose as substrate (for transfructosylation, in the absence of levan F4). kcat is 33.0 sec(-1) with sucrose as substrate (for transfructosylation, in the presence of 5 g/L levan F4). kcat is 33.7 sec(-1) with sucrose as substrate (for transfructosylation, in the presence of 55 g/L levan F4) (PubMed:32553967).</text>
    </kinetics>
    <phDependence>
        <text evidence="3">Optimum pH is 6.</text>
    </phDependence>
</comment>
<comment type="subunit">
    <text evidence="10">Monomer.</text>
</comment>
<comment type="subcellular location">
    <subcellularLocation>
        <location evidence="14">Secreted</location>
    </subcellularLocation>
</comment>
<comment type="induction">
    <text evidence="1 4 6">Induced by sucrose (PubMed:11739774, PubMed:2428811). Expression is controlled by the sacR non-coding regulatory region, located upstream from sacB (PubMed:2428811, PubMed:2993818).</text>
</comment>
<comment type="similarity">
    <text evidence="14">Belongs to the glycosyl hydrolase 68 family.</text>
</comment>
<reference key="1">
    <citation type="journal article" date="1985" name="Mol. Gen. Genet.">
        <title>The DNA sequence of the gene for the secreted Bacillus subtilis enzyme levansucrase and its genetic control sites.</title>
        <authorList>
            <person name="Steinmetz M."/>
            <person name="Le Coq D."/>
            <person name="Aymerich S."/>
            <person name="Gonzy-Treboul G."/>
            <person name="Gay P."/>
        </authorList>
    </citation>
    <scope>NUCLEOTIDE SEQUENCE [GENOMIC DNA]</scope>
    <scope>INDUCTION</scope>
    <source>
        <strain>168</strain>
    </source>
</reference>
<reference key="2">
    <citation type="submission" date="1997-04" db="EMBL/GenBank/DDBJ databases">
        <authorList>
            <person name="Denizot F."/>
        </authorList>
    </citation>
    <scope>NUCLEOTIDE SEQUENCE [GENOMIC DNA]</scope>
    <source>
        <strain>168</strain>
    </source>
</reference>
<reference key="3">
    <citation type="journal article" date="1997" name="Nature">
        <title>The complete genome sequence of the Gram-positive bacterium Bacillus subtilis.</title>
        <authorList>
            <person name="Kunst F."/>
            <person name="Ogasawara N."/>
            <person name="Moszer I."/>
            <person name="Albertini A.M."/>
            <person name="Alloni G."/>
            <person name="Azevedo V."/>
            <person name="Bertero M.G."/>
            <person name="Bessieres P."/>
            <person name="Bolotin A."/>
            <person name="Borchert S."/>
            <person name="Borriss R."/>
            <person name="Boursier L."/>
            <person name="Brans A."/>
            <person name="Braun M."/>
            <person name="Brignell S.C."/>
            <person name="Bron S."/>
            <person name="Brouillet S."/>
            <person name="Bruschi C.V."/>
            <person name="Caldwell B."/>
            <person name="Capuano V."/>
            <person name="Carter N.M."/>
            <person name="Choi S.-K."/>
            <person name="Codani J.-J."/>
            <person name="Connerton I.F."/>
            <person name="Cummings N.J."/>
            <person name="Daniel R.A."/>
            <person name="Denizot F."/>
            <person name="Devine K.M."/>
            <person name="Duesterhoeft A."/>
            <person name="Ehrlich S.D."/>
            <person name="Emmerson P.T."/>
            <person name="Entian K.-D."/>
            <person name="Errington J."/>
            <person name="Fabret C."/>
            <person name="Ferrari E."/>
            <person name="Foulger D."/>
            <person name="Fritz C."/>
            <person name="Fujita M."/>
            <person name="Fujita Y."/>
            <person name="Fuma S."/>
            <person name="Galizzi A."/>
            <person name="Galleron N."/>
            <person name="Ghim S.-Y."/>
            <person name="Glaser P."/>
            <person name="Goffeau A."/>
            <person name="Golightly E.J."/>
            <person name="Grandi G."/>
            <person name="Guiseppi G."/>
            <person name="Guy B.J."/>
            <person name="Haga K."/>
            <person name="Haiech J."/>
            <person name="Harwood C.R."/>
            <person name="Henaut A."/>
            <person name="Hilbert H."/>
            <person name="Holsappel S."/>
            <person name="Hosono S."/>
            <person name="Hullo M.-F."/>
            <person name="Itaya M."/>
            <person name="Jones L.-M."/>
            <person name="Joris B."/>
            <person name="Karamata D."/>
            <person name="Kasahara Y."/>
            <person name="Klaerr-Blanchard M."/>
            <person name="Klein C."/>
            <person name="Kobayashi Y."/>
            <person name="Koetter P."/>
            <person name="Koningstein G."/>
            <person name="Krogh S."/>
            <person name="Kumano M."/>
            <person name="Kurita K."/>
            <person name="Lapidus A."/>
            <person name="Lardinois S."/>
            <person name="Lauber J."/>
            <person name="Lazarevic V."/>
            <person name="Lee S.-M."/>
            <person name="Levine A."/>
            <person name="Liu H."/>
            <person name="Masuda S."/>
            <person name="Mauel C."/>
            <person name="Medigue C."/>
            <person name="Medina N."/>
            <person name="Mellado R.P."/>
            <person name="Mizuno M."/>
            <person name="Moestl D."/>
            <person name="Nakai S."/>
            <person name="Noback M."/>
            <person name="Noone D."/>
            <person name="O'Reilly M."/>
            <person name="Ogawa K."/>
            <person name="Ogiwara A."/>
            <person name="Oudega B."/>
            <person name="Park S.-H."/>
            <person name="Parro V."/>
            <person name="Pohl T.M."/>
            <person name="Portetelle D."/>
            <person name="Porwollik S."/>
            <person name="Prescott A.M."/>
            <person name="Presecan E."/>
            <person name="Pujic P."/>
            <person name="Purnelle B."/>
            <person name="Rapoport G."/>
            <person name="Rey M."/>
            <person name="Reynolds S."/>
            <person name="Rieger M."/>
            <person name="Rivolta C."/>
            <person name="Rocha E."/>
            <person name="Roche B."/>
            <person name="Rose M."/>
            <person name="Sadaie Y."/>
            <person name="Sato T."/>
            <person name="Scanlan E."/>
            <person name="Schleich S."/>
            <person name="Schroeter R."/>
            <person name="Scoffone F."/>
            <person name="Sekiguchi J."/>
            <person name="Sekowska A."/>
            <person name="Seror S.J."/>
            <person name="Serror P."/>
            <person name="Shin B.-S."/>
            <person name="Soldo B."/>
            <person name="Sorokin A."/>
            <person name="Tacconi E."/>
            <person name="Takagi T."/>
            <person name="Takahashi H."/>
            <person name="Takemaru K."/>
            <person name="Takeuchi M."/>
            <person name="Tamakoshi A."/>
            <person name="Tanaka T."/>
            <person name="Terpstra P."/>
            <person name="Tognoni A."/>
            <person name="Tosato V."/>
            <person name="Uchiyama S."/>
            <person name="Vandenbol M."/>
            <person name="Vannier F."/>
            <person name="Vassarotti A."/>
            <person name="Viari A."/>
            <person name="Wambutt R."/>
            <person name="Wedler E."/>
            <person name="Wedler H."/>
            <person name="Weitzenegger T."/>
            <person name="Winters P."/>
            <person name="Wipat A."/>
            <person name="Yamamoto H."/>
            <person name="Yamane K."/>
            <person name="Yasumoto K."/>
            <person name="Yata K."/>
            <person name="Yoshida K."/>
            <person name="Yoshikawa H.-F."/>
            <person name="Zumstein E."/>
            <person name="Yoshikawa H."/>
            <person name="Danchin A."/>
        </authorList>
    </citation>
    <scope>NUCLEOTIDE SEQUENCE [LARGE SCALE GENOMIC DNA]</scope>
    <source>
        <strain>168</strain>
    </source>
</reference>
<reference key="4">
    <citation type="journal article" date="1984" name="Biochem. Biophys. Res. Commun.">
        <title>Characterization of the precursor form of the exocellular levansucrase from Bacillus subtilis.</title>
        <authorList>
            <person name="Fouet A."/>
            <person name="Arnaud M."/>
            <person name="Klier A."/>
            <person name="Rapoport G."/>
        </authorList>
    </citation>
    <scope>NUCLEOTIDE SEQUENCE [GENOMIC DNA] OF 1-62</scope>
    <source>
        <strain>168 / PY79</strain>
    </source>
</reference>
<reference key="5">
    <citation type="journal article" date="1986" name="J. Bacteriol.">
        <title>Modulation of Bacillus subtilis levansucrase gene expression by sucrose and regulation of the steady-state mRNA level by sacU and sacQ genes.</title>
        <authorList>
            <person name="Shimotsu H."/>
            <person name="Henner D.J."/>
        </authorList>
    </citation>
    <scope>NUCLEOTIDE SEQUENCE [GENOMIC DNA] OF 1-68</scope>
    <scope>INDUCTION</scope>
</reference>
<reference key="6">
    <citation type="journal article" date="1974" name="Eur. J. Biochem.">
        <title>Kinetic studies of levansucrase of Bacillus subtilis.</title>
        <authorList>
            <person name="Chambert R."/>
            <person name="Treboul G."/>
            <person name="Dedonder R."/>
        </authorList>
    </citation>
    <scope>FUNCTION</scope>
    <scope>CATALYTIC ACTIVITY</scope>
</reference>
<reference key="7">
    <citation type="journal article" date="1975" name="Biochimie">
        <title>Levansucrase of Bacillus subtilis: reexamination of some physical and chemical properties.</title>
        <authorList>
            <person name="Gonzy-Treboul G."/>
            <person name="Chambert R."/>
            <person name="Dedonder R."/>
        </authorList>
    </citation>
    <scope>SUBUNIT</scope>
    <scope>AMINO ACID COMPOSITION</scope>
</reference>
<reference key="8">
    <citation type="journal article" date="2001" name="Microbiology">
        <title>yveB, encoding endolevanase LevB, is part of the sacB-yveB-yveA levansucrase tricistronic operon in Bacillus subtilis.</title>
        <authorList>
            <person name="Pereira Y."/>
            <person name="Petit-Glatron M.-F."/>
            <person name="Chambert R."/>
        </authorList>
    </citation>
    <scope>INDUCTION</scope>
</reference>
<reference key="9">
    <citation type="journal article" date="2015" name="Carbohydr. Polym.">
        <title>Bacillus subtilis 168 levansucrase (SacB) activity affects average levan molecular weight.</title>
        <authorList>
            <person name="Porras-Dominguez J.R."/>
            <person name="Avila-Fernandez A."/>
            <person name="Miranda-Molina A."/>
            <person name="Rodriguez-Alegria M.E."/>
            <person name="Munguia A.L."/>
        </authorList>
    </citation>
    <scope>ACTIVITY REGULATION</scope>
    <source>
        <strain>168</strain>
    </source>
</reference>
<reference evidence="17 18" key="10">
    <citation type="journal article" date="2003" name="Nat. Struct. Biol.">
        <title>Structural framework of fructosyl transfer in Bacillus subtilis levansucrase.</title>
        <authorList>
            <person name="Meng G."/>
            <person name="Futterer K."/>
        </authorList>
    </citation>
    <scope>X-RAY CRYSTALLOGRAPHY (1.50 ANGSTROMS) OF 30-473 IN COMPLEX WITH CA(2+) AND OF MUTANT ALA-342 IN COMPLEX WITH CA(2+) AND SUCROSE</scope>
    <scope>FUNCTION</scope>
    <scope>CATALYTIC ACTIVITY</scope>
    <scope>ACTIVITY REGULATION</scope>
    <scope>ACTIVE SITE</scope>
    <scope>MUTAGENESIS OF ASP-86; ASP-247 AND GLU-342</scope>
</reference>
<reference evidence="19" key="11">
    <citation type="journal article" date="2008" name="Protein Eng. Des. Sel.">
        <title>Selected mutations in Bacillus subtilis levansucrase semi-conserved regions affecting its biochemical properties.</title>
        <authorList>
            <person name="Ortiz-Soto M.E."/>
            <person name="Rivera M."/>
            <person name="Rudino-Pinera E."/>
            <person name="Olvera C."/>
            <person name="Lopez-Munguia A."/>
        </authorList>
    </citation>
    <scope>X-RAY CRYSTALLOGRAPHY (3.20 ANGSTROMS) OF 34-472 OF MUTANT ALA-164 IN COMPLEX WITH CA(2+)</scope>
    <scope>FUNCTION</scope>
    <scope>CATALYTIC ACTIVITY</scope>
    <scope>BIOPHYSICOCHEMICAL PROPERTIES</scope>
    <scope>MUTAGENESIS OF SER-164; HIS-243; ILE-341; ALA-344; ARG-360; GLY-361; PHE-414; TYR-429 AND ARG-433</scope>
</reference>
<reference evidence="20 21 22 23" key="12">
    <citation type="submission" date="2008-01" db="PDB data bank">
        <title>Donor substrate recognition in the raffinose-bound E342A mutant of fructosyltransferase Bacillus subtilis levansucrase.</title>
        <authorList>
            <person name="Meng G."/>
            <person name="Futterer K."/>
        </authorList>
    </citation>
    <scope>X-RAY CRYSTALLOGRAPHY (2.10 ANGSTROMS) OF MUTANTS ALA-86; ALA-247 AND ALA-342 IN COMPLEXES WITH CA(2+) AND RAFFINOSE</scope>
</reference>
<reference evidence="24" key="13">
    <citation type="journal article" date="2020" name="Int. J. Biol. Macromol.">
        <title>Implications of the mutation S164A on Bacillus subtilis levansucrase product specificity and insights into protein interactions acting upon levan synthesis.</title>
        <authorList>
            <person name="Ortiz-Soto M.E."/>
            <person name="Porras-Dominguez J.R."/>
            <person name="Rodriguez-Alegria M.E."/>
            <person name="Morales-Moreno L.A."/>
            <person name="Diaz-Vilchis A."/>
            <person name="Rudino-Pinera E."/>
            <person name="Beltran-Hernandez N.E."/>
            <person name="Rivera H.M."/>
            <person name="Seibel J."/>
            <person name="Lopez Munguia A."/>
        </authorList>
    </citation>
    <scope>X-RAY CRYSTALLOGRAPHY (2.60 ANGSTROMS) OF 30-473 OF MUTANT ALA-164 IN COMPLEX WITH CA(2+)</scope>
    <scope>FUNCTION</scope>
    <scope>CATALYTIC ACTIVITY</scope>
    <scope>BIOPHYSICOCHEMICAL PROPERTIES</scope>
    <scope>MUTAGENESIS OF SER-164</scope>
</reference>
<reference evidence="25" key="14">
    <citation type="journal article" date="2021" name="J. Biol. Chem.">
        <title>The molecular basis of the nonprocessive elongation mechanism in levansucrases.</title>
        <authorList>
            <person name="Raga-Carbajal E."/>
            <person name="Diaz-Vilchis A."/>
            <person name="Rojas-Trejo S.P."/>
            <person name="Rudino-Pinera E."/>
            <person name="Olvera C."/>
        </authorList>
    </citation>
    <scope>X-RAY CRYSTALLOGRAPHY (2.05 ANGSTROMS) OF 30-473 OF MUTANT ALA-86/ALA-342 IN COMPLEX WITH CA(2+) AND LEVAN-TYPE HEXASACCHARIDES</scope>
    <scope>FUNCTION</scope>
    <scope>CATALYTIC ACTIVITY</scope>
    <scope>BIOPHYSICOCHEMICAL PROPERTIES</scope>
    <scope>MUTAGENESIS OF ASP-117; PHE-182; TYR-187; TYR-237; ASN-242 AND LYS-363</scope>
</reference>
<gene>
    <name evidence="13" type="primary">sacB</name>
    <name type="ordered locus">BSU34450</name>
</gene>
<accession>P05655</accession>
<accession>P70984</accession>
<sequence>MNIKKFAKQATVLTFTTALLAGGATQAFAKETNQKPYKETYGISHITRHDMLQIPEQQKNEKYQVPEFDSSTIKNISSAKGLDVWDSWPLQNADGTVANYHGYHIVFALAGDPKNADDTSIYMFYQKVGETSIDSWKNAGRVFKDSDKFDANDSILKDQTQEWSGSATFTSDGKIRLFYTDFSGKHYGKQTLTTAQVNVSASDSSLNINGVEDYKSIFDGDGKTYQNVQQFIDEGNYSSGDNHTLRDPHYVEDKGHKYLVFEANTGTEDGYQGEESLFNKAYYGKSTSFFRQESQKLLQSDKKRTAELANGALGMIELNDDYTLKKVMKPLIASNTVTDEIERANVFKMNGKWYLFTDSRGSKMTIDGITSNDIYMLGYVSNSLTGPYKPLNKTGLVLKMDLDPNDVTFTYSHFAVPQAKGNNVVITSYMTNRGFYADKQSTFAPSFLLNIKGKKTSVVKDSILEQGQLTVNK</sequence>